<organism>
    <name type="scientific">Hydrogenobaculum sp. (strain Y04AAS1)</name>
    <dbReference type="NCBI Taxonomy" id="380749"/>
    <lineage>
        <taxon>Bacteria</taxon>
        <taxon>Pseudomonadati</taxon>
        <taxon>Aquificota</taxon>
        <taxon>Aquificia</taxon>
        <taxon>Aquificales</taxon>
        <taxon>Aquificaceae</taxon>
        <taxon>Hydrogenobaculum</taxon>
    </lineage>
</organism>
<comment type="function">
    <text evidence="1">Involved in unsaturated fatty acids biosynthesis. Catalyzes the dehydration of short chain beta-hydroxyacyl-ACPs and long chain saturated and unsaturated beta-hydroxyacyl-ACPs.</text>
</comment>
<comment type="catalytic activity">
    <reaction evidence="1">
        <text>a (3R)-hydroxyacyl-[ACP] = a (2E)-enoyl-[ACP] + H2O</text>
        <dbReference type="Rhea" id="RHEA:13097"/>
        <dbReference type="Rhea" id="RHEA-COMP:9925"/>
        <dbReference type="Rhea" id="RHEA-COMP:9945"/>
        <dbReference type="ChEBI" id="CHEBI:15377"/>
        <dbReference type="ChEBI" id="CHEBI:78784"/>
        <dbReference type="ChEBI" id="CHEBI:78827"/>
        <dbReference type="EC" id="4.2.1.59"/>
    </reaction>
</comment>
<comment type="subcellular location">
    <subcellularLocation>
        <location evidence="1">Cytoplasm</location>
    </subcellularLocation>
</comment>
<comment type="similarity">
    <text evidence="1">Belongs to the thioester dehydratase family. FabZ subfamily.</text>
</comment>
<dbReference type="EC" id="4.2.1.59" evidence="1"/>
<dbReference type="EMBL" id="CP001130">
    <property type="protein sequence ID" value="ACG57619.1"/>
    <property type="molecule type" value="Genomic_DNA"/>
</dbReference>
<dbReference type="RefSeq" id="WP_012513975.1">
    <property type="nucleotide sequence ID" value="NC_011126.1"/>
</dbReference>
<dbReference type="SMR" id="B4U908"/>
<dbReference type="STRING" id="380749.HY04AAS1_0932"/>
<dbReference type="KEGG" id="hya:HY04AAS1_0932"/>
<dbReference type="eggNOG" id="COG0764">
    <property type="taxonomic scope" value="Bacteria"/>
</dbReference>
<dbReference type="HOGENOM" id="CLU_078912_1_0_0"/>
<dbReference type="OrthoDB" id="9772788at2"/>
<dbReference type="GO" id="GO:0005737">
    <property type="term" value="C:cytoplasm"/>
    <property type="evidence" value="ECO:0007669"/>
    <property type="project" value="UniProtKB-SubCell"/>
</dbReference>
<dbReference type="GO" id="GO:0016020">
    <property type="term" value="C:membrane"/>
    <property type="evidence" value="ECO:0007669"/>
    <property type="project" value="GOC"/>
</dbReference>
<dbReference type="GO" id="GO:0019171">
    <property type="term" value="F:(3R)-hydroxyacyl-[acyl-carrier-protein] dehydratase activity"/>
    <property type="evidence" value="ECO:0007669"/>
    <property type="project" value="UniProtKB-EC"/>
</dbReference>
<dbReference type="GO" id="GO:0006633">
    <property type="term" value="P:fatty acid biosynthetic process"/>
    <property type="evidence" value="ECO:0007669"/>
    <property type="project" value="UniProtKB-UniRule"/>
</dbReference>
<dbReference type="GO" id="GO:0009245">
    <property type="term" value="P:lipid A biosynthetic process"/>
    <property type="evidence" value="ECO:0007669"/>
    <property type="project" value="UniProtKB-UniRule"/>
</dbReference>
<dbReference type="CDD" id="cd01288">
    <property type="entry name" value="FabZ"/>
    <property type="match status" value="1"/>
</dbReference>
<dbReference type="FunFam" id="3.10.129.10:FF:000001">
    <property type="entry name" value="3-hydroxyacyl-[acyl-carrier-protein] dehydratase FabZ"/>
    <property type="match status" value="1"/>
</dbReference>
<dbReference type="Gene3D" id="3.10.129.10">
    <property type="entry name" value="Hotdog Thioesterase"/>
    <property type="match status" value="1"/>
</dbReference>
<dbReference type="HAMAP" id="MF_00406">
    <property type="entry name" value="FabZ"/>
    <property type="match status" value="1"/>
</dbReference>
<dbReference type="InterPro" id="IPR013114">
    <property type="entry name" value="FabA_FabZ"/>
</dbReference>
<dbReference type="InterPro" id="IPR010084">
    <property type="entry name" value="FabZ"/>
</dbReference>
<dbReference type="InterPro" id="IPR029069">
    <property type="entry name" value="HotDog_dom_sf"/>
</dbReference>
<dbReference type="NCBIfam" id="TIGR01750">
    <property type="entry name" value="fabZ"/>
    <property type="match status" value="1"/>
</dbReference>
<dbReference type="NCBIfam" id="NF000582">
    <property type="entry name" value="PRK00006.1"/>
    <property type="match status" value="1"/>
</dbReference>
<dbReference type="PANTHER" id="PTHR30272">
    <property type="entry name" value="3-HYDROXYACYL-[ACYL-CARRIER-PROTEIN] DEHYDRATASE"/>
    <property type="match status" value="1"/>
</dbReference>
<dbReference type="PANTHER" id="PTHR30272:SF1">
    <property type="entry name" value="3-HYDROXYACYL-[ACYL-CARRIER-PROTEIN] DEHYDRATASE"/>
    <property type="match status" value="1"/>
</dbReference>
<dbReference type="Pfam" id="PF07977">
    <property type="entry name" value="FabA"/>
    <property type="match status" value="1"/>
</dbReference>
<dbReference type="SUPFAM" id="SSF54637">
    <property type="entry name" value="Thioesterase/thiol ester dehydrase-isomerase"/>
    <property type="match status" value="1"/>
</dbReference>
<reference key="1">
    <citation type="journal article" date="2009" name="J. Bacteriol.">
        <title>Complete and draft genome sequences of six members of the Aquificales.</title>
        <authorList>
            <person name="Reysenbach A.-L."/>
            <person name="Hamamura N."/>
            <person name="Podar M."/>
            <person name="Griffiths E."/>
            <person name="Ferreira S."/>
            <person name="Hochstein R."/>
            <person name="Heidelberg J."/>
            <person name="Johnson J."/>
            <person name="Mead D."/>
            <person name="Pohorille A."/>
            <person name="Sarmiento M."/>
            <person name="Schweighofer K."/>
            <person name="Seshadri R."/>
            <person name="Voytek M.A."/>
        </authorList>
    </citation>
    <scope>NUCLEOTIDE SEQUENCE [LARGE SCALE GENOMIC DNA]</scope>
    <source>
        <strain>Y04AAS1</strain>
    </source>
</reference>
<proteinExistence type="inferred from homology"/>
<name>FABZ_HYDS0</name>
<sequence length="148" mass="16412">MDVLEIMKIIPHRYPLLLVDKILEMELGKRIVGLKNVSVNEPFFQGHFPGYPLMPGVLMLEAMAQVGGILMIKSLGLEIGKYAVVFAGIDEARFKRPVYPGDQLIMELETISLKKTISKMKGTATVNNQVVAEAILMAAARELESIKK</sequence>
<accession>B4U908</accession>
<feature type="chain" id="PRO_1000123646" description="3-hydroxyacyl-[acyl-carrier-protein] dehydratase FabZ">
    <location>
        <begin position="1"/>
        <end position="148"/>
    </location>
</feature>
<feature type="active site" evidence="1">
    <location>
        <position position="47"/>
    </location>
</feature>
<gene>
    <name evidence="1" type="primary">fabZ</name>
    <name type="ordered locus">HY04AAS1_0932</name>
</gene>
<keyword id="KW-0963">Cytoplasm</keyword>
<keyword id="KW-0441">Lipid A biosynthesis</keyword>
<keyword id="KW-0444">Lipid biosynthesis</keyword>
<keyword id="KW-0443">Lipid metabolism</keyword>
<keyword id="KW-0456">Lyase</keyword>
<protein>
    <recommendedName>
        <fullName evidence="1">3-hydroxyacyl-[acyl-carrier-protein] dehydratase FabZ</fullName>
        <ecNumber evidence="1">4.2.1.59</ecNumber>
    </recommendedName>
    <alternativeName>
        <fullName evidence="1">(3R)-hydroxymyristoyl-[acyl-carrier-protein] dehydratase</fullName>
        <shortName evidence="1">(3R)-hydroxymyristoyl-ACP dehydrase</shortName>
    </alternativeName>
    <alternativeName>
        <fullName evidence="1">Beta-hydroxyacyl-ACP dehydratase</fullName>
    </alternativeName>
</protein>
<evidence type="ECO:0000255" key="1">
    <source>
        <dbReference type="HAMAP-Rule" id="MF_00406"/>
    </source>
</evidence>